<gene>
    <name evidence="2" type="primary">hemW</name>
    <name type="ordered locus">sll1917</name>
</gene>
<protein>
    <recommendedName>
        <fullName>Heme chaperone HemW</fullName>
    </recommendedName>
    <alternativeName>
        <fullName>Oxygen-independent coproporphyrinogen-III oxidase-like protein sll1917</fullName>
    </alternativeName>
</protein>
<keyword id="KW-0001">2Fe-2S</keyword>
<keyword id="KW-0143">Chaperone</keyword>
<keyword id="KW-0963">Cytoplasm</keyword>
<keyword id="KW-0349">Heme</keyword>
<keyword id="KW-0408">Iron</keyword>
<keyword id="KW-0411">Iron-sulfur</keyword>
<keyword id="KW-0479">Metal-binding</keyword>
<keyword id="KW-1185">Reference proteome</keyword>
<keyword id="KW-0949">S-adenosyl-L-methionine</keyword>
<organism>
    <name type="scientific">Synechocystis sp. (strain ATCC 27184 / PCC 6803 / Kazusa)</name>
    <dbReference type="NCBI Taxonomy" id="1111708"/>
    <lineage>
        <taxon>Bacteria</taxon>
        <taxon>Bacillati</taxon>
        <taxon>Cyanobacteriota</taxon>
        <taxon>Cyanophyceae</taxon>
        <taxon>Synechococcales</taxon>
        <taxon>Merismopediaceae</taxon>
        <taxon>Synechocystis</taxon>
    </lineage>
</organism>
<comment type="function">
    <text evidence="1 5">Probably acts as a heme chaperone, transferring heme to an unknown acceptor. Binds one molecule of heme per monomer, possibly covalently (By similarity). Binds 1 [2Fe-2S] cluster. Although this protein has sequence motifs typically found in proteins binding the [4Fe-4S]-AdoMet radical-SAM cluster and S-adenosylmethionine, spectroscopic evidence suggests that a [2Fe-2S] cluster is present; S-adenosylmethionine was not detected. Has no detectable coproporphyrinogen-III oxidase activity (PubMed:20194361).</text>
</comment>
<comment type="cofactor">
    <cofactor evidence="4">
        <name>[4Fe-4S] cluster</name>
        <dbReference type="ChEBI" id="CHEBI:49883"/>
    </cofactor>
</comment>
<comment type="subcellular location">
    <subcellularLocation>
        <location evidence="3">Cytoplasm</location>
    </subcellularLocation>
</comment>
<comment type="induction">
    <text evidence="5">Induced under microoxic conditions.</text>
</comment>
<comment type="disruption phenotype">
    <text evidence="5">Cells lacking this gene have no detectable phenotype.</text>
</comment>
<comment type="miscellaneous">
    <text evidence="1">Might carry two S-adenosyl-L-methionine binding sites with only one binding to the iron-sulfur cluster.</text>
</comment>
<comment type="similarity">
    <text evidence="6">Belongs to the anaerobic coproporphyrinogen-III oxidase family. HemW subfamily.</text>
</comment>
<accession>P73245</accession>
<feature type="chain" id="PRO_0000109961" description="Heme chaperone HemW">
    <location>
        <begin position="1"/>
        <end position="412"/>
    </location>
</feature>
<feature type="domain" description="Radical SAM core" evidence="4">
    <location>
        <begin position="4"/>
        <end position="241"/>
    </location>
</feature>
<feature type="binding site" evidence="1">
    <location>
        <position position="13"/>
    </location>
    <ligand>
        <name>S-adenosyl-L-methionine</name>
        <dbReference type="ChEBI" id="CHEBI:59789"/>
        <label>1</label>
    </ligand>
</feature>
<feature type="binding site" evidence="7">
    <location>
        <position position="19"/>
    </location>
    <ligand>
        <name>[2Fe-2S] cluster</name>
        <dbReference type="ChEBI" id="CHEBI:190135"/>
    </ligand>
</feature>
<feature type="binding site" evidence="7">
    <location>
        <position position="23"/>
    </location>
    <ligand>
        <name>[2Fe-2S] cluster</name>
        <dbReference type="ChEBI" id="CHEBI:190135"/>
    </ligand>
</feature>
<feature type="binding site" evidence="7">
    <location>
        <position position="26"/>
    </location>
    <ligand>
        <name>[2Fe-2S] cluster</name>
        <dbReference type="ChEBI" id="CHEBI:190135"/>
    </ligand>
</feature>
<feature type="binding site" evidence="1">
    <location>
        <position position="72"/>
    </location>
    <ligand>
        <name>S-adenosyl-L-methionine</name>
        <dbReference type="ChEBI" id="CHEBI:59789"/>
        <label>1</label>
    </ligand>
</feature>
<feature type="binding site" evidence="1">
    <location>
        <begin position="73"/>
        <end position="74"/>
    </location>
    <ligand>
        <name>S-adenosyl-L-methionine</name>
        <dbReference type="ChEBI" id="CHEBI:59789"/>
        <label>2</label>
    </ligand>
</feature>
<feature type="binding site" evidence="1">
    <location>
        <position position="105"/>
    </location>
    <ligand>
        <name>S-adenosyl-L-methionine</name>
        <dbReference type="ChEBI" id="CHEBI:59789"/>
        <label>1</label>
    </ligand>
</feature>
<feature type="binding site" evidence="1">
    <location>
        <position position="132"/>
    </location>
    <ligand>
        <name>S-adenosyl-L-methionine</name>
        <dbReference type="ChEBI" id="CHEBI:59789"/>
        <label>2</label>
    </ligand>
</feature>
<feature type="binding site" evidence="1">
    <location>
        <position position="144"/>
    </location>
    <ligand>
        <name>S-adenosyl-L-methionine</name>
        <dbReference type="ChEBI" id="CHEBI:59789"/>
        <label>2</label>
    </ligand>
</feature>
<feature type="binding site" evidence="1">
    <location>
        <position position="169"/>
    </location>
    <ligand>
        <name>S-adenosyl-L-methionine</name>
        <dbReference type="ChEBI" id="CHEBI:59789"/>
        <label>2</label>
    </ligand>
</feature>
<proteinExistence type="evidence at protein level"/>
<evidence type="ECO:0000250" key="1">
    <source>
        <dbReference type="UniProtKB" id="P32131"/>
    </source>
</evidence>
<evidence type="ECO:0000250" key="2">
    <source>
        <dbReference type="UniProtKB" id="P52062"/>
    </source>
</evidence>
<evidence type="ECO:0000250" key="3">
    <source>
        <dbReference type="UniProtKB" id="Q9CGF7"/>
    </source>
</evidence>
<evidence type="ECO:0000255" key="4">
    <source>
        <dbReference type="PROSITE-ProRule" id="PRU01266"/>
    </source>
</evidence>
<evidence type="ECO:0000269" key="5">
    <source>
    </source>
</evidence>
<evidence type="ECO:0000305" key="6"/>
<evidence type="ECO:0000305" key="7">
    <source>
    </source>
</evidence>
<name>HEMW_SYNY3</name>
<sequence>MNTGTYLMPTAAYIHIPFCRQRCFYCDFPIAVTGFQSLTLDGWVGEYVEAVCREIAGQQHQGQPLQTVFFGGGTPSLLPITGLEKILLAVDQYLGIAPDAEISIEIDPGTFDQVQLQGYKNLGINRFSLGVQAFQDNLLALCGRHHRRRDIDQALTAIAKENIENWSLDLITGLPEQTAADWHSSLTLALAAGPKHISCYDLVLEPQTVFDKWEQRGKLAVPPPERSADFYRHGQEVLTQAGFHHYEISNYGRPGHQCRHNQIYWRNLPYYGLGMGATSYIDGKRFGRPRTRNGYYQWLESWLNQGCPIPGERVSPLENLLESLMLGLRLTAGVTWAQLPSVNQTEKAKILATLTSFGDRRWLEFYGEDNQMLAPNQTTTETVQRFCFTDPEGILYSNQILSALFAALEEDF</sequence>
<reference key="1">
    <citation type="journal article" date="1996" name="DNA Res.">
        <title>Sequence analysis of the genome of the unicellular cyanobacterium Synechocystis sp. strain PCC6803. II. Sequence determination of the entire genome and assignment of potential protein-coding regions.</title>
        <authorList>
            <person name="Kaneko T."/>
            <person name="Sato S."/>
            <person name="Kotani H."/>
            <person name="Tanaka A."/>
            <person name="Asamizu E."/>
            <person name="Nakamura Y."/>
            <person name="Miyajima N."/>
            <person name="Hirosawa M."/>
            <person name="Sugiura M."/>
            <person name="Sasamoto S."/>
            <person name="Kimura T."/>
            <person name="Hosouchi T."/>
            <person name="Matsuno A."/>
            <person name="Muraki A."/>
            <person name="Nakazaki N."/>
            <person name="Naruo K."/>
            <person name="Okumura S."/>
            <person name="Shimpo S."/>
            <person name="Takeuchi C."/>
            <person name="Wada T."/>
            <person name="Watanabe A."/>
            <person name="Yamada M."/>
            <person name="Yasuda M."/>
            <person name="Tabata S."/>
        </authorList>
    </citation>
    <scope>NUCLEOTIDE SEQUENCE [LARGE SCALE GENOMIC DNA]</scope>
    <source>
        <strain>ATCC 27184 / PCC 6803 / Kazusa</strain>
    </source>
</reference>
<reference key="2">
    <citation type="journal article" date="2010" name="Plant Cell Physiol.">
        <title>Functional differentiation of two analogous coproporphyrinogen III oxidases for heme and chlorophyll biosynthesis pathways in the cyanobacterium Synechocystis sp. PCC 6803.</title>
        <authorList>
            <person name="Goto T."/>
            <person name="Aoki R."/>
            <person name="Minamizaki K."/>
            <person name="Fujita Y."/>
        </authorList>
    </citation>
    <scope>FUNCTION</scope>
    <scope>DISRUPTION PHENOTYPE</scope>
    <scope>FE-S CLUSTER-BINDING</scope>
    <scope>INDUCTION</scope>
    <source>
        <strain>ATCC 27184 / PCC 6803 / Kazusa</strain>
    </source>
</reference>
<dbReference type="EMBL" id="BA000022">
    <property type="protein sequence ID" value="BAA17272.1"/>
    <property type="molecule type" value="Genomic_DNA"/>
</dbReference>
<dbReference type="PIR" id="S75358">
    <property type="entry name" value="S75358"/>
</dbReference>
<dbReference type="SMR" id="P73245"/>
<dbReference type="FunCoup" id="P73245">
    <property type="interactions" value="388"/>
</dbReference>
<dbReference type="IntAct" id="P73245">
    <property type="interactions" value="1"/>
</dbReference>
<dbReference type="STRING" id="1148.gene:10498135"/>
<dbReference type="PaxDb" id="1148-1652349"/>
<dbReference type="EnsemblBacteria" id="BAA17272">
    <property type="protein sequence ID" value="BAA17272"/>
    <property type="gene ID" value="BAA17272"/>
</dbReference>
<dbReference type="KEGG" id="syn:sll1917"/>
<dbReference type="eggNOG" id="COG0635">
    <property type="taxonomic scope" value="Bacteria"/>
</dbReference>
<dbReference type="InParanoid" id="P73245"/>
<dbReference type="PhylomeDB" id="P73245"/>
<dbReference type="Proteomes" id="UP000001425">
    <property type="component" value="Chromosome"/>
</dbReference>
<dbReference type="GO" id="GO:0005737">
    <property type="term" value="C:cytoplasm"/>
    <property type="evidence" value="ECO:0000250"/>
    <property type="project" value="UniProtKB"/>
</dbReference>
<dbReference type="GO" id="GO:0051537">
    <property type="term" value="F:2 iron, 2 sulfur cluster binding"/>
    <property type="evidence" value="ECO:0007669"/>
    <property type="project" value="UniProtKB-KW"/>
</dbReference>
<dbReference type="GO" id="GO:0051539">
    <property type="term" value="F:4 iron, 4 sulfur cluster binding"/>
    <property type="evidence" value="ECO:0000314"/>
    <property type="project" value="UniProtKB"/>
</dbReference>
<dbReference type="GO" id="GO:0004109">
    <property type="term" value="F:coproporphyrinogen oxidase activity"/>
    <property type="evidence" value="ECO:0007669"/>
    <property type="project" value="InterPro"/>
</dbReference>
<dbReference type="GO" id="GO:0046872">
    <property type="term" value="F:metal ion binding"/>
    <property type="evidence" value="ECO:0007669"/>
    <property type="project" value="UniProtKB-KW"/>
</dbReference>
<dbReference type="GO" id="GO:0006779">
    <property type="term" value="P:porphyrin-containing compound biosynthetic process"/>
    <property type="evidence" value="ECO:0000315"/>
    <property type="project" value="UniProtKB"/>
</dbReference>
<dbReference type="FunFam" id="3.80.30.20:FF:000012">
    <property type="entry name" value="Coproporphyrinogen-III oxidase"/>
    <property type="match status" value="1"/>
</dbReference>
<dbReference type="Gene3D" id="3.80.30.20">
    <property type="entry name" value="tm_1862 like domain"/>
    <property type="match status" value="1"/>
</dbReference>
<dbReference type="InterPro" id="IPR034505">
    <property type="entry name" value="Coproporphyrinogen-III_oxidase"/>
</dbReference>
<dbReference type="InterPro" id="IPR006638">
    <property type="entry name" value="Elp3/MiaA/NifB-like_rSAM"/>
</dbReference>
<dbReference type="InterPro" id="IPR004559">
    <property type="entry name" value="HemW-like"/>
</dbReference>
<dbReference type="InterPro" id="IPR007197">
    <property type="entry name" value="rSAM"/>
</dbReference>
<dbReference type="InterPro" id="IPR023404">
    <property type="entry name" value="rSAM_horseshoe"/>
</dbReference>
<dbReference type="NCBIfam" id="TIGR00539">
    <property type="entry name" value="hemN_rel"/>
    <property type="match status" value="1"/>
</dbReference>
<dbReference type="PANTHER" id="PTHR13932">
    <property type="entry name" value="COPROPORPHYRINIGEN III OXIDASE"/>
    <property type="match status" value="1"/>
</dbReference>
<dbReference type="PANTHER" id="PTHR13932:SF5">
    <property type="entry name" value="RADICAL S-ADENOSYL METHIONINE DOMAIN-CONTAINING PROTEIN 1, MITOCHONDRIAL"/>
    <property type="match status" value="1"/>
</dbReference>
<dbReference type="Pfam" id="PF04055">
    <property type="entry name" value="Radical_SAM"/>
    <property type="match status" value="1"/>
</dbReference>
<dbReference type="SFLD" id="SFLDG01065">
    <property type="entry name" value="anaerobic_coproporphyrinogen-I"/>
    <property type="match status" value="2"/>
</dbReference>
<dbReference type="SFLD" id="SFLDF00562">
    <property type="entry name" value="HemN-like__clustered_with_heat"/>
    <property type="match status" value="1"/>
</dbReference>
<dbReference type="SFLD" id="SFLDF00288">
    <property type="entry name" value="HemN-like__clustered_with_nucl"/>
    <property type="match status" value="1"/>
</dbReference>
<dbReference type="SMART" id="SM00729">
    <property type="entry name" value="Elp3"/>
    <property type="match status" value="1"/>
</dbReference>
<dbReference type="SUPFAM" id="SSF102114">
    <property type="entry name" value="Radical SAM enzymes"/>
    <property type="match status" value="1"/>
</dbReference>
<dbReference type="PROSITE" id="PS51918">
    <property type="entry name" value="RADICAL_SAM"/>
    <property type="match status" value="1"/>
</dbReference>